<comment type="function">
    <text>Mitochondrial membrane ATP synthase (F(1)F(0) ATP synthase or Complex V) produces ATP from ADP in the presence of a proton gradient across the membrane which is generated by electron transport complexes of the respiratory chain. F-type ATPases consist of two structural domains, F(1) - containing the extramembraneous catalytic core, and F(0) - containing the membrane proton channel, linked together by a central stalk and a peripheral stalk. During catalysis, ATP synthesis in the catalytic domain of F(1) is coupled via a rotary mechanism of the central stalk subunits to proton translocation. Subunits alpha and beta form the catalytic core in F(1). Rotation of the central stalk against the surrounding alpha(3)beta(3) subunits leads to hydrolysis of ATP in three separate catalytic sites on the beta subunits.</text>
</comment>
<comment type="catalytic activity">
    <reaction>
        <text>ATP + H2O + 4 H(+)(in) = ADP + phosphate + 5 H(+)(out)</text>
        <dbReference type="Rhea" id="RHEA:57720"/>
        <dbReference type="ChEBI" id="CHEBI:15377"/>
        <dbReference type="ChEBI" id="CHEBI:15378"/>
        <dbReference type="ChEBI" id="CHEBI:30616"/>
        <dbReference type="ChEBI" id="CHEBI:43474"/>
        <dbReference type="ChEBI" id="CHEBI:456216"/>
        <dbReference type="EC" id="7.1.2.2"/>
    </reaction>
</comment>
<comment type="subunit">
    <text>F-type ATPases have 2 components, CF(1) - the catalytic core - and CF(0) - the membrane proton channel. CF(1) has five subunits: alpha(3), beta(3), gamma(1), delta(1), epsilon(1). CF(0) has three main subunits: a, b and c.</text>
</comment>
<comment type="subcellular location">
    <subcellularLocation>
        <location>Mitochondrion</location>
    </subcellularLocation>
    <subcellularLocation>
        <location>Mitochondrion inner membrane</location>
    </subcellularLocation>
    <text>Peripheral membrane protein.</text>
</comment>
<comment type="similarity">
    <text evidence="3">Belongs to the ATPase alpha/beta chains family.</text>
</comment>
<sequence length="519" mass="55533">MFKSGISAFARTARPSFAAASRRAVRPAALNLRAPALSRFASSAGVGDGKIYQVIGAVVDVKFDTDKLPPILNALETQNNGQKLVLEVSQHLGENVVRCIAMDGTEGLVRGAKASDTGAPITIPVGPATLGRIINVTGDPIDERGPIKTDKFRPIHAEAPEFVEQSTTAEILVTGIKVVDLLAPYARGGKIGLFGGAGVGKTVFIQELINNIAKAHGGYSVFTGVGERTREGNDLYHEMQETSVIQLDGDSKVALVFGQMNEPPGARARVALTGLTIAEYFRDEEGQDVLLFIDNIFRFTQAGSEVSALLGRIPSAVGYQPTLAVDMGQMQERITTTTKGSITSVQAVYVPADDLTDPAPATTFAHLDATTVLSRGISELGIYPAVDPLDSKSRMLDPRIVGQEHYETATRVQQILQEYKSLQDIIAILGMDELSEADKLTVERARKIQRFLSQPFTVAQVFTGIEGKLVDLKDTIASFKAILAGEGDDLPEGAFYMVGDFASARAKGEKILAELEGQA</sequence>
<proteinExistence type="evidence at transcript level"/>
<evidence type="ECO:0000250" key="1"/>
<evidence type="ECO:0000255" key="2"/>
<evidence type="ECO:0000305" key="3"/>
<dbReference type="EC" id="7.1.2.2"/>
<dbReference type="EMBL" id="X53720">
    <property type="protein sequence ID" value="CAA37756.1"/>
    <property type="molecule type" value="mRNA"/>
</dbReference>
<dbReference type="EMBL" id="M84192">
    <property type="protein sequence ID" value="AAA33562.1"/>
    <property type="molecule type" value="Genomic_DNA"/>
</dbReference>
<dbReference type="EMBL" id="AL355933">
    <property type="protein sequence ID" value="CAB91479.1"/>
    <property type="molecule type" value="Genomic_DNA"/>
</dbReference>
<dbReference type="EMBL" id="CM002237">
    <property type="protein sequence ID" value="EAA34017.2"/>
    <property type="molecule type" value="Genomic_DNA"/>
</dbReference>
<dbReference type="PIR" id="JC1112">
    <property type="entry name" value="JC1112"/>
</dbReference>
<dbReference type="RefSeq" id="XP_963253.2">
    <property type="nucleotide sequence ID" value="XM_958160.3"/>
</dbReference>
<dbReference type="SMR" id="P23704"/>
<dbReference type="FunCoup" id="P23704">
    <property type="interactions" value="1075"/>
</dbReference>
<dbReference type="STRING" id="367110.P23704"/>
<dbReference type="PaxDb" id="5141-EFNCRP00000006556"/>
<dbReference type="EnsemblFungi" id="EAA34017">
    <property type="protein sequence ID" value="EAA34017"/>
    <property type="gene ID" value="NCU05430"/>
</dbReference>
<dbReference type="GeneID" id="3879401"/>
<dbReference type="KEGG" id="ncr:NCU05430"/>
<dbReference type="VEuPathDB" id="FungiDB:NCU05430"/>
<dbReference type="HOGENOM" id="CLU_022398_0_2_1"/>
<dbReference type="InParanoid" id="P23704"/>
<dbReference type="OMA" id="SMEEGGW"/>
<dbReference type="OrthoDB" id="14523at2759"/>
<dbReference type="Proteomes" id="UP000001805">
    <property type="component" value="Chromosome 6, Linkage Group II"/>
</dbReference>
<dbReference type="GO" id="GO:0005743">
    <property type="term" value="C:mitochondrial inner membrane"/>
    <property type="evidence" value="ECO:0007669"/>
    <property type="project" value="UniProtKB-SubCell"/>
</dbReference>
<dbReference type="GO" id="GO:0045259">
    <property type="term" value="C:proton-transporting ATP synthase complex"/>
    <property type="evidence" value="ECO:0007669"/>
    <property type="project" value="UniProtKB-KW"/>
</dbReference>
<dbReference type="GO" id="GO:0043531">
    <property type="term" value="F:ADP binding"/>
    <property type="evidence" value="ECO:0007669"/>
    <property type="project" value="EnsemblFungi"/>
</dbReference>
<dbReference type="GO" id="GO:0005524">
    <property type="term" value="F:ATP binding"/>
    <property type="evidence" value="ECO:0007669"/>
    <property type="project" value="UniProtKB-KW"/>
</dbReference>
<dbReference type="GO" id="GO:0016887">
    <property type="term" value="F:ATP hydrolysis activity"/>
    <property type="evidence" value="ECO:0007669"/>
    <property type="project" value="EnsemblFungi"/>
</dbReference>
<dbReference type="GO" id="GO:0046933">
    <property type="term" value="F:proton-transporting ATP synthase activity, rotational mechanism"/>
    <property type="evidence" value="ECO:0007669"/>
    <property type="project" value="EnsemblFungi"/>
</dbReference>
<dbReference type="GO" id="GO:0046961">
    <property type="term" value="F:proton-transporting ATPase activity, rotational mechanism"/>
    <property type="evidence" value="ECO:0007669"/>
    <property type="project" value="EnsemblFungi"/>
</dbReference>
<dbReference type="GO" id="GO:0042776">
    <property type="term" value="P:proton motive force-driven mitochondrial ATP synthesis"/>
    <property type="evidence" value="ECO:0000318"/>
    <property type="project" value="GO_Central"/>
</dbReference>
<dbReference type="CDD" id="cd18110">
    <property type="entry name" value="ATP-synt_F1_beta_C"/>
    <property type="match status" value="1"/>
</dbReference>
<dbReference type="CDD" id="cd18115">
    <property type="entry name" value="ATP-synt_F1_beta_N"/>
    <property type="match status" value="1"/>
</dbReference>
<dbReference type="CDD" id="cd01133">
    <property type="entry name" value="F1-ATPase_beta_CD"/>
    <property type="match status" value="1"/>
</dbReference>
<dbReference type="FunFam" id="1.10.1140.10:FF:000001">
    <property type="entry name" value="ATP synthase subunit beta"/>
    <property type="match status" value="1"/>
</dbReference>
<dbReference type="FunFam" id="2.40.10.170:FF:000004">
    <property type="entry name" value="ATP synthase subunit beta"/>
    <property type="match status" value="1"/>
</dbReference>
<dbReference type="FunFam" id="3.40.50.300:FF:000026">
    <property type="entry name" value="ATP synthase subunit beta"/>
    <property type="match status" value="1"/>
</dbReference>
<dbReference type="Gene3D" id="2.40.10.170">
    <property type="match status" value="1"/>
</dbReference>
<dbReference type="Gene3D" id="1.10.1140.10">
    <property type="entry name" value="Bovine Mitochondrial F1-atpase, Atp Synthase Beta Chain, Chain D, domain 3"/>
    <property type="match status" value="1"/>
</dbReference>
<dbReference type="Gene3D" id="3.40.50.300">
    <property type="entry name" value="P-loop containing nucleotide triphosphate hydrolases"/>
    <property type="match status" value="1"/>
</dbReference>
<dbReference type="HAMAP" id="MF_01347">
    <property type="entry name" value="ATP_synth_beta_bact"/>
    <property type="match status" value="1"/>
</dbReference>
<dbReference type="InterPro" id="IPR003593">
    <property type="entry name" value="AAA+_ATPase"/>
</dbReference>
<dbReference type="InterPro" id="IPR055190">
    <property type="entry name" value="ATP-synt_VA_C"/>
</dbReference>
<dbReference type="InterPro" id="IPR005722">
    <property type="entry name" value="ATP_synth_F1_bsu"/>
</dbReference>
<dbReference type="InterPro" id="IPR020003">
    <property type="entry name" value="ATPase_a/bsu_AS"/>
</dbReference>
<dbReference type="InterPro" id="IPR050053">
    <property type="entry name" value="ATPase_alpha/beta_chains"/>
</dbReference>
<dbReference type="InterPro" id="IPR004100">
    <property type="entry name" value="ATPase_F1/V1/A1_a/bsu_N"/>
</dbReference>
<dbReference type="InterPro" id="IPR036121">
    <property type="entry name" value="ATPase_F1/V1/A1_a/bsu_N_sf"/>
</dbReference>
<dbReference type="InterPro" id="IPR000194">
    <property type="entry name" value="ATPase_F1/V1/A1_a/bsu_nucl-bd"/>
</dbReference>
<dbReference type="InterPro" id="IPR024034">
    <property type="entry name" value="ATPase_F1/V1_b/a_C"/>
</dbReference>
<dbReference type="InterPro" id="IPR027417">
    <property type="entry name" value="P-loop_NTPase"/>
</dbReference>
<dbReference type="NCBIfam" id="TIGR01039">
    <property type="entry name" value="atpD"/>
    <property type="match status" value="1"/>
</dbReference>
<dbReference type="PANTHER" id="PTHR15184">
    <property type="entry name" value="ATP SYNTHASE"/>
    <property type="match status" value="1"/>
</dbReference>
<dbReference type="PANTHER" id="PTHR15184:SF71">
    <property type="entry name" value="ATP SYNTHASE SUBUNIT BETA, MITOCHONDRIAL"/>
    <property type="match status" value="1"/>
</dbReference>
<dbReference type="Pfam" id="PF00006">
    <property type="entry name" value="ATP-synt_ab"/>
    <property type="match status" value="1"/>
</dbReference>
<dbReference type="Pfam" id="PF02874">
    <property type="entry name" value="ATP-synt_ab_N"/>
    <property type="match status" value="1"/>
</dbReference>
<dbReference type="Pfam" id="PF22919">
    <property type="entry name" value="ATP-synt_VA_C"/>
    <property type="match status" value="1"/>
</dbReference>
<dbReference type="PIRSF" id="PIRSF039072">
    <property type="entry name" value="ATPase_subunit_beta"/>
    <property type="match status" value="1"/>
</dbReference>
<dbReference type="SMART" id="SM00382">
    <property type="entry name" value="AAA"/>
    <property type="match status" value="1"/>
</dbReference>
<dbReference type="SUPFAM" id="SSF47917">
    <property type="entry name" value="C-terminal domain of alpha and beta subunits of F1 ATP synthase"/>
    <property type="match status" value="1"/>
</dbReference>
<dbReference type="SUPFAM" id="SSF50615">
    <property type="entry name" value="N-terminal domain of alpha and beta subunits of F1 ATP synthase"/>
    <property type="match status" value="1"/>
</dbReference>
<dbReference type="SUPFAM" id="SSF52540">
    <property type="entry name" value="P-loop containing nucleoside triphosphate hydrolases"/>
    <property type="match status" value="1"/>
</dbReference>
<dbReference type="PROSITE" id="PS00152">
    <property type="entry name" value="ATPASE_ALPHA_BETA"/>
    <property type="match status" value="1"/>
</dbReference>
<keyword id="KW-0066">ATP synthesis</keyword>
<keyword id="KW-0067">ATP-binding</keyword>
<keyword id="KW-0139">CF(1)</keyword>
<keyword id="KW-0375">Hydrogen ion transport</keyword>
<keyword id="KW-0406">Ion transport</keyword>
<keyword id="KW-0472">Membrane</keyword>
<keyword id="KW-0496">Mitochondrion</keyword>
<keyword id="KW-0999">Mitochondrion inner membrane</keyword>
<keyword id="KW-0547">Nucleotide-binding</keyword>
<keyword id="KW-1185">Reference proteome</keyword>
<keyword id="KW-0809">Transit peptide</keyword>
<keyword id="KW-1278">Translocase</keyword>
<keyword id="KW-0813">Transport</keyword>
<name>ATPB_NEUCR</name>
<reference key="1">
    <citation type="journal article" date="1990" name="Nucleic Acids Res.">
        <title>Nucleotide sequence of a full-length cDNA coding for the mitochondrial precursor protein of the beta-subunit of F1-ATPase from Neurospora crassa.</title>
        <authorList>
            <person name="Rassow J."/>
            <person name="Harmey M.A."/>
            <person name="Mueller H.A."/>
            <person name="Neupert W."/>
            <person name="Tropschug M."/>
        </authorList>
    </citation>
    <scope>NUCLEOTIDE SEQUENCE [MRNA]</scope>
</reference>
<reference key="2">
    <citation type="journal article" date="1992" name="Gene">
        <title>Structures of the genes encoding the alpha and beta subunits of the Neurospora crassa mitochondrial ATP synthase.</title>
        <authorList>
            <person name="Bowman E.J."/>
            <person name="Knock T.E."/>
        </authorList>
    </citation>
    <scope>NUCLEOTIDE SEQUENCE [GENOMIC DNA]</scope>
</reference>
<reference key="3">
    <citation type="journal article" date="2003" name="Nucleic Acids Res.">
        <title>What's in the genome of a filamentous fungus? Analysis of the Neurospora genome sequence.</title>
        <authorList>
            <person name="Mannhaupt G."/>
            <person name="Montrone C."/>
            <person name="Haase D."/>
            <person name="Mewes H.-W."/>
            <person name="Aign V."/>
            <person name="Hoheisel J.D."/>
            <person name="Fartmann B."/>
            <person name="Nyakatura G."/>
            <person name="Kempken F."/>
            <person name="Maier J."/>
            <person name="Schulte U."/>
        </authorList>
    </citation>
    <scope>NUCLEOTIDE SEQUENCE [LARGE SCALE GENOMIC DNA]</scope>
    <source>
        <strain>ATCC 24698 / 74-OR23-1A / CBS 708.71 / DSM 1257 / FGSC 987</strain>
    </source>
</reference>
<reference key="4">
    <citation type="journal article" date="2003" name="Nature">
        <title>The genome sequence of the filamentous fungus Neurospora crassa.</title>
        <authorList>
            <person name="Galagan J.E."/>
            <person name="Calvo S.E."/>
            <person name="Borkovich K.A."/>
            <person name="Selker E.U."/>
            <person name="Read N.D."/>
            <person name="Jaffe D.B."/>
            <person name="FitzHugh W."/>
            <person name="Ma L.-J."/>
            <person name="Smirnov S."/>
            <person name="Purcell S."/>
            <person name="Rehman B."/>
            <person name="Elkins T."/>
            <person name="Engels R."/>
            <person name="Wang S."/>
            <person name="Nielsen C.B."/>
            <person name="Butler J."/>
            <person name="Endrizzi M."/>
            <person name="Qui D."/>
            <person name="Ianakiev P."/>
            <person name="Bell-Pedersen D."/>
            <person name="Nelson M.A."/>
            <person name="Werner-Washburne M."/>
            <person name="Selitrennikoff C.P."/>
            <person name="Kinsey J.A."/>
            <person name="Braun E.L."/>
            <person name="Zelter A."/>
            <person name="Schulte U."/>
            <person name="Kothe G.O."/>
            <person name="Jedd G."/>
            <person name="Mewes H.-W."/>
            <person name="Staben C."/>
            <person name="Marcotte E."/>
            <person name="Greenberg D."/>
            <person name="Roy A."/>
            <person name="Foley K."/>
            <person name="Naylor J."/>
            <person name="Stange-Thomann N."/>
            <person name="Barrett R."/>
            <person name="Gnerre S."/>
            <person name="Kamal M."/>
            <person name="Kamvysselis M."/>
            <person name="Mauceli E.W."/>
            <person name="Bielke C."/>
            <person name="Rudd S."/>
            <person name="Frishman D."/>
            <person name="Krystofova S."/>
            <person name="Rasmussen C."/>
            <person name="Metzenberg R.L."/>
            <person name="Perkins D.D."/>
            <person name="Kroken S."/>
            <person name="Cogoni C."/>
            <person name="Macino G."/>
            <person name="Catcheside D.E.A."/>
            <person name="Li W."/>
            <person name="Pratt R.J."/>
            <person name="Osmani S.A."/>
            <person name="DeSouza C.P.C."/>
            <person name="Glass N.L."/>
            <person name="Orbach M.J."/>
            <person name="Berglund J.A."/>
            <person name="Voelker R."/>
            <person name="Yarden O."/>
            <person name="Plamann M."/>
            <person name="Seiler S."/>
            <person name="Dunlap J.C."/>
            <person name="Radford A."/>
            <person name="Aramayo R."/>
            <person name="Natvig D.O."/>
            <person name="Alex L.A."/>
            <person name="Mannhaupt G."/>
            <person name="Ebbole D.J."/>
            <person name="Freitag M."/>
            <person name="Paulsen I."/>
            <person name="Sachs M.S."/>
            <person name="Lander E.S."/>
            <person name="Nusbaum C."/>
            <person name="Birren B.W."/>
        </authorList>
    </citation>
    <scope>NUCLEOTIDE SEQUENCE [LARGE SCALE GENOMIC DNA]</scope>
    <source>
        <strain>ATCC 24698 / 74-OR23-1A / CBS 708.71 / DSM 1257 / FGSC 987</strain>
    </source>
</reference>
<feature type="transit peptide" description="Mitochondrion" evidence="2">
    <location>
        <begin position="1"/>
        <end status="unknown"/>
    </location>
</feature>
<feature type="chain" id="PRO_0000002452" description="ATP synthase subunit beta, mitochondrial">
    <location>
        <begin status="unknown"/>
        <end position="519"/>
    </location>
</feature>
<feature type="binding site" evidence="1">
    <location>
        <begin position="195"/>
        <end position="202"/>
    </location>
    <ligand>
        <name>ATP</name>
        <dbReference type="ChEBI" id="CHEBI:30616"/>
    </ligand>
</feature>
<accession>P23704</accession>
<accession>Q7RVI4</accession>
<gene>
    <name type="primary">atp-2</name>
    <name type="ORF">B8B20.320</name>
    <name type="ORF">NCU05430</name>
</gene>
<organism>
    <name type="scientific">Neurospora crassa (strain ATCC 24698 / 74-OR23-1A / CBS 708.71 / DSM 1257 / FGSC 987)</name>
    <dbReference type="NCBI Taxonomy" id="367110"/>
    <lineage>
        <taxon>Eukaryota</taxon>
        <taxon>Fungi</taxon>
        <taxon>Dikarya</taxon>
        <taxon>Ascomycota</taxon>
        <taxon>Pezizomycotina</taxon>
        <taxon>Sordariomycetes</taxon>
        <taxon>Sordariomycetidae</taxon>
        <taxon>Sordariales</taxon>
        <taxon>Sordariaceae</taxon>
        <taxon>Neurospora</taxon>
    </lineage>
</organism>
<protein>
    <recommendedName>
        <fullName>ATP synthase subunit beta, mitochondrial</fullName>
        <ecNumber>7.1.2.2</ecNumber>
    </recommendedName>
</protein>